<protein>
    <recommendedName>
        <fullName evidence="1">ATP synthase subunit 5, mitochondrial</fullName>
        <shortName evidence="1">ATP synthase chain 5</shortName>
    </recommendedName>
    <alternativeName>
        <fullName evidence="1">Oligomycin sensitivity conferral protein</fullName>
        <shortName evidence="1">OSCP</shortName>
    </alternativeName>
</protein>
<reference evidence="8" key="1">
    <citation type="submission" date="2016-08" db="UniProtKB">
        <authorList>
            <person name="Fearnley I.M."/>
        </authorList>
    </citation>
    <scope>PARTIAL PROTEIN SEQUENCE</scope>
    <source>
        <strain evidence="7">A16 / NCYC 2310</strain>
    </source>
</reference>
<reference evidence="8" key="2">
    <citation type="journal article" date="2015" name="Biochem. J.">
        <title>The purification and characterization of ATP synthase complexes from the mitochondria of four fungal species.</title>
        <authorList>
            <person name="Liu S."/>
            <person name="Charlesworth T.J."/>
            <person name="Bason J.V."/>
            <person name="Montgomery M.G."/>
            <person name="Harbour M.E."/>
            <person name="Fearnley I.M."/>
            <person name="Walker J.E."/>
        </authorList>
    </citation>
    <scope>PROTEIN SEQUENCE OF 1-29</scope>
    <scope>IDENTIFICATION IN ATP SYNTHASE COMPLEX</scope>
    <scope>FUNCTION OF ATPASE COMPLEX</scope>
    <scope>SUBUNIT</scope>
    <scope>SUBCELLULAR LOCATION</scope>
    <scope>MASS SPECTROMETRY</scope>
    <scope>IDENTIFICATION BY MASS SPECTROMETRY</scope>
    <source>
        <strain evidence="6">A16 / NCYC 2310</strain>
    </source>
</reference>
<reference evidence="10 11 12" key="3">
    <citation type="journal article" date="2016" name="Proc. Natl. Acad. Sci. U.S.A.">
        <title>Structure of the mitochondrial ATP synthase from Pichia angusta determined by electron cryo-microscopy.</title>
        <authorList>
            <person name="Vinothkumar K.R."/>
            <person name="Montgomery M.G."/>
            <person name="Liu S."/>
            <person name="Walker J.E."/>
        </authorList>
    </citation>
    <scope>STRUCTURE BY ELECTRON MICROSCOPY (7.0 ANGSTROMS) OF MONOMERIC ATP SYNTHASE COMPLEX IN COMPLEX WITH BOVINE ATPIF1</scope>
    <scope>FUNCTION</scope>
    <scope>SUBUNIT</scope>
    <scope>SUBCELLULAR LOCATION</scope>
</reference>
<name>ATPO_PICAN</name>
<proteinExistence type="evidence at protein level"/>
<dbReference type="PDB" id="5LQX">
    <property type="method" value="EM"/>
    <property type="resolution" value="7.90 A"/>
    <property type="chains" value="U=1-194"/>
</dbReference>
<dbReference type="PDB" id="5LQY">
    <property type="method" value="EM"/>
    <property type="resolution" value="7.80 A"/>
    <property type="chains" value="U=1-194"/>
</dbReference>
<dbReference type="PDB" id="5LQZ">
    <property type="method" value="EM"/>
    <property type="resolution" value="7.00 A"/>
    <property type="chains" value="U=1-194"/>
</dbReference>
<dbReference type="PDBsum" id="5LQX"/>
<dbReference type="PDBsum" id="5LQY"/>
<dbReference type="PDBsum" id="5LQZ"/>
<dbReference type="EMDB" id="EMD-4100"/>
<dbReference type="EMDB" id="EMD-4101"/>
<dbReference type="EMDB" id="EMD-4102"/>
<dbReference type="SMR" id="C0HK56"/>
<dbReference type="GO" id="GO:0005743">
    <property type="term" value="C:mitochondrial inner membrane"/>
    <property type="evidence" value="ECO:0007669"/>
    <property type="project" value="UniProtKB-SubCell"/>
</dbReference>
<dbReference type="GO" id="GO:0045259">
    <property type="term" value="C:proton-transporting ATP synthase complex"/>
    <property type="evidence" value="ECO:0007669"/>
    <property type="project" value="UniProtKB-KW"/>
</dbReference>
<dbReference type="GO" id="GO:0046933">
    <property type="term" value="F:proton-transporting ATP synthase activity, rotational mechanism"/>
    <property type="evidence" value="ECO:0007669"/>
    <property type="project" value="InterPro"/>
</dbReference>
<dbReference type="Gene3D" id="1.10.520.20">
    <property type="entry name" value="N-terminal domain of the delta subunit of the F1F0-ATP synthase"/>
    <property type="match status" value="1"/>
</dbReference>
<dbReference type="HAMAP" id="MF_01416">
    <property type="entry name" value="ATP_synth_delta_bact"/>
    <property type="match status" value="1"/>
</dbReference>
<dbReference type="InterPro" id="IPR026015">
    <property type="entry name" value="ATP_synth_OSCP/delta_N_sf"/>
</dbReference>
<dbReference type="InterPro" id="IPR000711">
    <property type="entry name" value="ATPase_OSCP/dsu"/>
</dbReference>
<dbReference type="NCBIfam" id="TIGR01145">
    <property type="entry name" value="ATP_synt_delta"/>
    <property type="match status" value="1"/>
</dbReference>
<dbReference type="PANTHER" id="PTHR11910">
    <property type="entry name" value="ATP SYNTHASE DELTA CHAIN"/>
    <property type="match status" value="1"/>
</dbReference>
<dbReference type="Pfam" id="PF00213">
    <property type="entry name" value="OSCP"/>
    <property type="match status" value="1"/>
</dbReference>
<dbReference type="PRINTS" id="PR00125">
    <property type="entry name" value="ATPASEDELTA"/>
</dbReference>
<dbReference type="SUPFAM" id="SSF47928">
    <property type="entry name" value="N-terminal domain of the delta subunit of the F1F0-ATP synthase"/>
    <property type="match status" value="1"/>
</dbReference>
<gene>
    <name evidence="1" type="primary">ATP5</name>
    <name evidence="1" type="synonym">OSCP</name>
</gene>
<feature type="chain" id="PRO_0000445325" description="ATP synthase subunit 5, mitochondrial" evidence="5">
    <location>
        <begin position="1"/>
        <end position="194"/>
    </location>
</feature>
<accession>C0HK56</accession>
<evidence type="ECO:0000250" key="1">
    <source>
        <dbReference type="UniProtKB" id="P09457"/>
    </source>
</evidence>
<evidence type="ECO:0000250" key="2">
    <source>
        <dbReference type="UniProtKB" id="Q6C9B1"/>
    </source>
</evidence>
<evidence type="ECO:0000269" key="3">
    <source>
    </source>
</evidence>
<evidence type="ECO:0000269" key="4">
    <source>
    </source>
</evidence>
<evidence type="ECO:0000269" key="5">
    <source ref="1"/>
</evidence>
<evidence type="ECO:0000303" key="6">
    <source>
    </source>
</evidence>
<evidence type="ECO:0000303" key="7">
    <source ref="1"/>
</evidence>
<evidence type="ECO:0000305" key="8"/>
<evidence type="ECO:0000305" key="9">
    <source>
    </source>
</evidence>
<evidence type="ECO:0007744" key="10">
    <source>
        <dbReference type="PDB" id="5LQX"/>
    </source>
</evidence>
<evidence type="ECO:0007744" key="11">
    <source>
        <dbReference type="PDB" id="5LQY"/>
    </source>
</evidence>
<evidence type="ECO:0007744" key="12">
    <source>
        <dbReference type="PDB" id="5LQZ"/>
    </source>
</evidence>
<keyword id="KW-0002">3D-structure</keyword>
<keyword id="KW-0066">ATP synthesis</keyword>
<keyword id="KW-0138">CF(0)</keyword>
<keyword id="KW-0903">Direct protein sequencing</keyword>
<keyword id="KW-0375">Hydrogen ion transport</keyword>
<keyword id="KW-0406">Ion transport</keyword>
<keyword id="KW-0472">Membrane</keyword>
<keyword id="KW-0496">Mitochondrion</keyword>
<keyword id="KW-0999">Mitochondrion inner membrane</keyword>
<keyword id="KW-0813">Transport</keyword>
<sequence length="194" mass="20655">ASAAPIKPPVQLFGLDGTYATALFSASAKDSSIEKTFQSVQKLSSTISKDAKVAQVLSNPALSLNSRKEVVSVLSKELKLEPVVSNLLTVLAENNRLSLFDSIAKQFSVLNDAYNGVVEATVVSAKPLDSKILNRLTKSITNSKYVGPGKTLKIKNEVDPEILGGLIVEVADKSVDLSLASKVNKLNKVLSETI</sequence>
<organism evidence="6">
    <name type="scientific">Pichia angusta</name>
    <name type="common">Yeast</name>
    <name type="synonym">Hansenula polymorpha</name>
    <dbReference type="NCBI Taxonomy" id="870730"/>
    <lineage>
        <taxon>Eukaryota</taxon>
        <taxon>Fungi</taxon>
        <taxon>Dikarya</taxon>
        <taxon>Ascomycota</taxon>
        <taxon>Saccharomycotina</taxon>
        <taxon>Pichiomycetes</taxon>
        <taxon>Pichiales</taxon>
        <taxon>Pichiaceae</taxon>
        <taxon>Ogataea</taxon>
    </lineage>
</organism>
<comment type="function">
    <text evidence="2 3">Mitochondrial membrane ATP synthase (F(1)F(0) ATP synthase or Complex V) produces ATP from ADP in the presence of a proton gradient across the membrane which is generated by electron transport complexes of the respiratory chain (PubMed:25759169). F-type ATP synthases consist of two structural domains, F(1) - containing the extramembraneous catalytic core, and F(0) - containing the membrane proton channel, linked together by a central stalk and a peripheral stalk (PubMed:27791192). During catalysis, ATP synthesis in the catalytic domain of F(1) is coupled via a rotary mechanism of the central stalk subunits to proton translocation (By similarity). Part of the complex F(0) domain and the peripheral stalk, which acts as a stator to hold the catalytic alpha/ATP1(3)beta/ATP2(3) subcomplex and subunit a/ATP6 static relative to the rotary elements (By similarity).</text>
</comment>
<comment type="subunit">
    <text evidence="2 3 4">F-type ATP synthases have 2 components, the catalytic core F(1) and the membrane-embedded component F(0), linked together by a central stalk and a peripheral stalk (PubMed:27791192). The central stalk, also called rotor shaft, is often seen as part of F(1) (PubMed:27791192). The peripheral stalk is seen as part of F(0). F(0) contains the membrane channel next to the rotor (PubMed:27791192). F-type ATP synthases form dimers but each monomer functions independently in ATP generation (By similarity). The dimer consists of 18 different polypeptides: ATP1 (subunit alpha, part of F(1), 3 molecules per monomer), ATP2 (subunit beta, part of F(1), 3 molecules per monomer), ATP3 (subunit gamma, part of the central stalk), ATP4 (subunit b, part of the peripheral stalk), ATP5/OSCP (subunit 5/OSCP, part of the peripheral stalk), ATP6 (subunit a, part of the peripheral stalk), ATP7 (subunit d, part of the peripheral stalk), ATP8 (subunit 8, part of the peripheral stalk), OLI1 (subunit c, part of the rotor, 10 molecules per monomer), ATP14 (subunit h, part of the peripheral stalk), ATP15 (subunit epsilon, part of the central stalk), ATP16 (subunit delta, part of the central stalk), ATP17 (subunit f, part of the peripheral stalk), ATP18 (subunit i/j, part of the peripheral stalk) (PubMed:25759169, PubMed:27791192). Dimer-specific subunits are ATP19 (subunit k, at interface between monomers), ATP20 (subunit g, at interface between monomers), TIM11 (subunit e, at interface between monomers) (By similarity). Also contains subunit L (PubMed:25759169).</text>
</comment>
<comment type="subcellular location">
    <subcellularLocation>
        <location evidence="9">Mitochondrion inner membrane</location>
        <topology evidence="9">Peripheral membrane protein</topology>
        <orientation evidence="9">Matrix side</orientation>
    </subcellularLocation>
    <text evidence="9">The F-type ATP synthase complex is anchored in the mitochondrial inner membrane via the F(0) domain with the F(1) domain and the peripheral stalk extending into the mitochondrial matrix.</text>
</comment>
<comment type="mass spectrometry" mass="20654.0" method="MALDI" evidence="3"/>
<comment type="similarity">
    <text evidence="8">Belongs to the ATPase delta chain family.</text>
</comment>